<feature type="chain" id="PRO_1000075506" description="Peptide chain release factor 1">
    <location>
        <begin position="1"/>
        <end position="349"/>
    </location>
</feature>
<feature type="modified residue" description="N5-methylglutamine" evidence="1">
    <location>
        <position position="233"/>
    </location>
</feature>
<accession>A5CYC3</accession>
<gene>
    <name evidence="1" type="primary">prfA</name>
    <name type="ordered locus">PTH_2830</name>
</gene>
<name>RF1_PELTS</name>
<reference key="1">
    <citation type="journal article" date="2008" name="Genome Res.">
        <title>The genome of Pelotomaculum thermopropionicum reveals niche-associated evolution in anaerobic microbiota.</title>
        <authorList>
            <person name="Kosaka T."/>
            <person name="Kato S."/>
            <person name="Shimoyama T."/>
            <person name="Ishii S."/>
            <person name="Abe T."/>
            <person name="Watanabe K."/>
        </authorList>
    </citation>
    <scope>NUCLEOTIDE SEQUENCE [LARGE SCALE GENOMIC DNA]</scope>
    <source>
        <strain>DSM 13744 / JCM 10971 / SI</strain>
    </source>
</reference>
<protein>
    <recommendedName>
        <fullName evidence="1">Peptide chain release factor 1</fullName>
        <shortName evidence="1">RF-1</shortName>
    </recommendedName>
</protein>
<evidence type="ECO:0000255" key="1">
    <source>
        <dbReference type="HAMAP-Rule" id="MF_00093"/>
    </source>
</evidence>
<organism>
    <name type="scientific">Pelotomaculum thermopropionicum (strain DSM 13744 / JCM 10971 / SI)</name>
    <dbReference type="NCBI Taxonomy" id="370438"/>
    <lineage>
        <taxon>Bacteria</taxon>
        <taxon>Bacillati</taxon>
        <taxon>Bacillota</taxon>
        <taxon>Clostridia</taxon>
        <taxon>Eubacteriales</taxon>
        <taxon>Desulfotomaculaceae</taxon>
        <taxon>Pelotomaculum</taxon>
    </lineage>
</organism>
<dbReference type="EMBL" id="AP009389">
    <property type="protein sequence ID" value="BAF61011.1"/>
    <property type="molecule type" value="Genomic_DNA"/>
</dbReference>
<dbReference type="SMR" id="A5CYC3"/>
<dbReference type="STRING" id="370438.PTH_2830"/>
<dbReference type="KEGG" id="pth:PTH_2830"/>
<dbReference type="eggNOG" id="COG0216">
    <property type="taxonomic scope" value="Bacteria"/>
</dbReference>
<dbReference type="HOGENOM" id="CLU_036856_0_1_9"/>
<dbReference type="Proteomes" id="UP000006556">
    <property type="component" value="Chromosome"/>
</dbReference>
<dbReference type="GO" id="GO:0005737">
    <property type="term" value="C:cytoplasm"/>
    <property type="evidence" value="ECO:0007669"/>
    <property type="project" value="UniProtKB-SubCell"/>
</dbReference>
<dbReference type="GO" id="GO:0016149">
    <property type="term" value="F:translation release factor activity, codon specific"/>
    <property type="evidence" value="ECO:0007669"/>
    <property type="project" value="UniProtKB-UniRule"/>
</dbReference>
<dbReference type="FunFam" id="3.30.160.20:FF:000004">
    <property type="entry name" value="Peptide chain release factor 1"/>
    <property type="match status" value="1"/>
</dbReference>
<dbReference type="FunFam" id="3.30.70.1660:FF:000002">
    <property type="entry name" value="Peptide chain release factor 1"/>
    <property type="match status" value="1"/>
</dbReference>
<dbReference type="FunFam" id="3.30.70.1660:FF:000004">
    <property type="entry name" value="Peptide chain release factor 1"/>
    <property type="match status" value="1"/>
</dbReference>
<dbReference type="Gene3D" id="3.30.160.20">
    <property type="match status" value="1"/>
</dbReference>
<dbReference type="Gene3D" id="3.30.70.1660">
    <property type="match status" value="2"/>
</dbReference>
<dbReference type="Gene3D" id="6.10.140.1950">
    <property type="match status" value="1"/>
</dbReference>
<dbReference type="HAMAP" id="MF_00093">
    <property type="entry name" value="Rel_fac_1"/>
    <property type="match status" value="1"/>
</dbReference>
<dbReference type="InterPro" id="IPR005139">
    <property type="entry name" value="PCRF"/>
</dbReference>
<dbReference type="InterPro" id="IPR000352">
    <property type="entry name" value="Pep_chain_release_fac_I"/>
</dbReference>
<dbReference type="InterPro" id="IPR045853">
    <property type="entry name" value="Pep_chain_release_fac_I_sf"/>
</dbReference>
<dbReference type="InterPro" id="IPR050057">
    <property type="entry name" value="Prokaryotic/Mito_RF"/>
</dbReference>
<dbReference type="InterPro" id="IPR004373">
    <property type="entry name" value="RF-1"/>
</dbReference>
<dbReference type="NCBIfam" id="TIGR00019">
    <property type="entry name" value="prfA"/>
    <property type="match status" value="1"/>
</dbReference>
<dbReference type="NCBIfam" id="NF001859">
    <property type="entry name" value="PRK00591.1"/>
    <property type="match status" value="1"/>
</dbReference>
<dbReference type="PANTHER" id="PTHR43804">
    <property type="entry name" value="LD18447P"/>
    <property type="match status" value="1"/>
</dbReference>
<dbReference type="PANTHER" id="PTHR43804:SF7">
    <property type="entry name" value="LD18447P"/>
    <property type="match status" value="1"/>
</dbReference>
<dbReference type="Pfam" id="PF03462">
    <property type="entry name" value="PCRF"/>
    <property type="match status" value="1"/>
</dbReference>
<dbReference type="Pfam" id="PF00472">
    <property type="entry name" value="RF-1"/>
    <property type="match status" value="1"/>
</dbReference>
<dbReference type="SMART" id="SM00937">
    <property type="entry name" value="PCRF"/>
    <property type="match status" value="1"/>
</dbReference>
<dbReference type="SUPFAM" id="SSF75620">
    <property type="entry name" value="Release factor"/>
    <property type="match status" value="1"/>
</dbReference>
<sequence>MIEKLDSIEKKYEELENLIGNPEIIADIARWQEYVKAHAELADIVAVYRDYKKVVKEIQDTIALMKEEPDEDLREMAQAELDELTEKKDNLENRLKMLLLPKDPNDEKNVILEIRAGTGGEEAALFAADLFRMYSRYAERQGWRTEILDANYTDIGGFKEVISLIEGKGVYSRMKFESGVHRVQRIPTTESGGRIHTSAATVAVLPEAEEVDVQIDPDDLRIDVFCSSGHGGQSVNTTQSAVRITHIPTGIVVSMQDEKSQHKNKEKAMKVLRARLLDRVQQEHQQKIASTRKSMVGTGDRSERIRTYNFPQNRVTDHRVGLTLHRLDSVLDGDLDEIIDTLILKGGQA</sequence>
<keyword id="KW-0963">Cytoplasm</keyword>
<keyword id="KW-0488">Methylation</keyword>
<keyword id="KW-0648">Protein biosynthesis</keyword>
<keyword id="KW-1185">Reference proteome</keyword>
<comment type="function">
    <text evidence="1">Peptide chain release factor 1 directs the termination of translation in response to the peptide chain termination codons UAG and UAA.</text>
</comment>
<comment type="subcellular location">
    <subcellularLocation>
        <location evidence="1">Cytoplasm</location>
    </subcellularLocation>
</comment>
<comment type="PTM">
    <text evidence="1">Methylated by PrmC. Methylation increases the termination efficiency of RF1.</text>
</comment>
<comment type="similarity">
    <text evidence="1">Belongs to the prokaryotic/mitochondrial release factor family.</text>
</comment>
<proteinExistence type="inferred from homology"/>